<accession>Q21WR9</accession>
<evidence type="ECO:0000255" key="1">
    <source>
        <dbReference type="HAMAP-Rule" id="MF_01629"/>
    </source>
</evidence>
<evidence type="ECO:0000305" key="2"/>
<protein>
    <recommendedName>
        <fullName evidence="1">Pyridoxine/pyridoxamine 5'-phosphate oxidase</fullName>
        <ecNumber evidence="1">1.4.3.5</ecNumber>
    </recommendedName>
    <alternativeName>
        <fullName evidence="1">PNP/PMP oxidase</fullName>
        <shortName evidence="1">PNPOx</shortName>
    </alternativeName>
    <alternativeName>
        <fullName evidence="1">Pyridoxal 5'-phosphate synthase</fullName>
    </alternativeName>
</protein>
<sequence>MTSIAHLRKSYERAELSEDASHADPLQQFEKWLKEAISAEIPEPNAMTVATVASNLRPSTRVVLIKGYDERGITWFTNYDSRKGQELAGNPYAALQFHWVELERVVRIEGIVEKVSEEESDSYFHSRPLDSRIGAWASPQSQVISGRSVLVANAAKYGAKFLLNPPRPPHWGGYRLKPDHWQFWQGRKSRLHDRLRYTLIEPASTLPDAKPVWIRERLAP</sequence>
<name>PDXH_ALBFT</name>
<organism>
    <name type="scientific">Albidiferax ferrireducens (strain ATCC BAA-621 / DSM 15236 / T118)</name>
    <name type="common">Rhodoferax ferrireducens</name>
    <dbReference type="NCBI Taxonomy" id="338969"/>
    <lineage>
        <taxon>Bacteria</taxon>
        <taxon>Pseudomonadati</taxon>
        <taxon>Pseudomonadota</taxon>
        <taxon>Betaproteobacteria</taxon>
        <taxon>Burkholderiales</taxon>
        <taxon>Comamonadaceae</taxon>
        <taxon>Rhodoferax</taxon>
    </lineage>
</organism>
<gene>
    <name evidence="1" type="primary">pdxH</name>
    <name type="ordered locus">Rfer_2059</name>
</gene>
<dbReference type="EC" id="1.4.3.5" evidence="1"/>
<dbReference type="EMBL" id="CP000267">
    <property type="protein sequence ID" value="ABD69784.1"/>
    <property type="status" value="ALT_INIT"/>
    <property type="molecule type" value="Genomic_DNA"/>
</dbReference>
<dbReference type="RefSeq" id="WP_041790548.1">
    <property type="nucleotide sequence ID" value="NC_007908.1"/>
</dbReference>
<dbReference type="SMR" id="Q21WR9"/>
<dbReference type="STRING" id="338969.Rfer_2059"/>
<dbReference type="KEGG" id="rfr:Rfer_2059"/>
<dbReference type="eggNOG" id="COG0259">
    <property type="taxonomic scope" value="Bacteria"/>
</dbReference>
<dbReference type="HOGENOM" id="CLU_032263_2_2_4"/>
<dbReference type="OrthoDB" id="9780392at2"/>
<dbReference type="UniPathway" id="UPA01068">
    <property type="reaction ID" value="UER00304"/>
</dbReference>
<dbReference type="UniPathway" id="UPA01068">
    <property type="reaction ID" value="UER00305"/>
</dbReference>
<dbReference type="Proteomes" id="UP000008332">
    <property type="component" value="Chromosome"/>
</dbReference>
<dbReference type="GO" id="GO:0010181">
    <property type="term" value="F:FMN binding"/>
    <property type="evidence" value="ECO:0007669"/>
    <property type="project" value="UniProtKB-UniRule"/>
</dbReference>
<dbReference type="GO" id="GO:0004733">
    <property type="term" value="F:pyridoxamine phosphate oxidase activity"/>
    <property type="evidence" value="ECO:0007669"/>
    <property type="project" value="UniProtKB-UniRule"/>
</dbReference>
<dbReference type="GO" id="GO:0008615">
    <property type="term" value="P:pyridoxine biosynthetic process"/>
    <property type="evidence" value="ECO:0007669"/>
    <property type="project" value="UniProtKB-KW"/>
</dbReference>
<dbReference type="Gene3D" id="2.30.110.10">
    <property type="entry name" value="Electron Transport, Fmn-binding Protein, Chain A"/>
    <property type="match status" value="1"/>
</dbReference>
<dbReference type="HAMAP" id="MF_01629">
    <property type="entry name" value="PdxH"/>
    <property type="match status" value="1"/>
</dbReference>
<dbReference type="InterPro" id="IPR000659">
    <property type="entry name" value="Pyridox_Oxase"/>
</dbReference>
<dbReference type="InterPro" id="IPR011576">
    <property type="entry name" value="Pyridox_Oxase_N"/>
</dbReference>
<dbReference type="InterPro" id="IPR019576">
    <property type="entry name" value="Pyridoxamine_oxidase_dimer_C"/>
</dbReference>
<dbReference type="InterPro" id="IPR012349">
    <property type="entry name" value="Split_barrel_FMN-bd"/>
</dbReference>
<dbReference type="NCBIfam" id="TIGR00558">
    <property type="entry name" value="pdxH"/>
    <property type="match status" value="1"/>
</dbReference>
<dbReference type="NCBIfam" id="NF004231">
    <property type="entry name" value="PRK05679.1"/>
    <property type="match status" value="1"/>
</dbReference>
<dbReference type="PANTHER" id="PTHR10851:SF0">
    <property type="entry name" value="PYRIDOXINE-5'-PHOSPHATE OXIDASE"/>
    <property type="match status" value="1"/>
</dbReference>
<dbReference type="PANTHER" id="PTHR10851">
    <property type="entry name" value="PYRIDOXINE-5-PHOSPHATE OXIDASE"/>
    <property type="match status" value="1"/>
</dbReference>
<dbReference type="Pfam" id="PF10590">
    <property type="entry name" value="PNP_phzG_C"/>
    <property type="match status" value="1"/>
</dbReference>
<dbReference type="Pfam" id="PF01243">
    <property type="entry name" value="PNPOx_N"/>
    <property type="match status" value="1"/>
</dbReference>
<dbReference type="PIRSF" id="PIRSF000190">
    <property type="entry name" value="Pyd_amn-ph_oxd"/>
    <property type="match status" value="1"/>
</dbReference>
<dbReference type="SUPFAM" id="SSF50475">
    <property type="entry name" value="FMN-binding split barrel"/>
    <property type="match status" value="1"/>
</dbReference>
<feature type="chain" id="PRO_0000255883" description="Pyridoxine/pyridoxamine 5'-phosphate oxidase">
    <location>
        <begin position="1"/>
        <end position="220"/>
    </location>
</feature>
<feature type="binding site" evidence="1">
    <location>
        <begin position="8"/>
        <end position="11"/>
    </location>
    <ligand>
        <name>substrate</name>
    </ligand>
</feature>
<feature type="binding site" evidence="1">
    <location>
        <begin position="61"/>
        <end position="66"/>
    </location>
    <ligand>
        <name>FMN</name>
        <dbReference type="ChEBI" id="CHEBI:58210"/>
    </ligand>
</feature>
<feature type="binding site" evidence="1">
    <location>
        <position position="66"/>
    </location>
    <ligand>
        <name>substrate</name>
    </ligand>
</feature>
<feature type="binding site" evidence="1">
    <location>
        <begin position="76"/>
        <end position="77"/>
    </location>
    <ligand>
        <name>FMN</name>
        <dbReference type="ChEBI" id="CHEBI:58210"/>
    </ligand>
</feature>
<feature type="binding site" evidence="1">
    <location>
        <position position="82"/>
    </location>
    <ligand>
        <name>FMN</name>
        <dbReference type="ChEBI" id="CHEBI:58210"/>
    </ligand>
</feature>
<feature type="binding site" evidence="1">
    <location>
        <position position="83"/>
    </location>
    <ligand>
        <name>FMN</name>
        <dbReference type="ChEBI" id="CHEBI:58210"/>
    </ligand>
</feature>
<feature type="binding site" evidence="1">
    <location>
        <position position="123"/>
    </location>
    <ligand>
        <name>substrate</name>
    </ligand>
</feature>
<feature type="binding site" evidence="1">
    <location>
        <position position="127"/>
    </location>
    <ligand>
        <name>substrate</name>
    </ligand>
</feature>
<feature type="binding site" evidence="1">
    <location>
        <position position="131"/>
    </location>
    <ligand>
        <name>substrate</name>
    </ligand>
</feature>
<feature type="binding site" evidence="1">
    <location>
        <begin position="140"/>
        <end position="141"/>
    </location>
    <ligand>
        <name>FMN</name>
        <dbReference type="ChEBI" id="CHEBI:58210"/>
    </ligand>
</feature>
<feature type="binding site" evidence="1">
    <location>
        <position position="184"/>
    </location>
    <ligand>
        <name>FMN</name>
        <dbReference type="ChEBI" id="CHEBI:58210"/>
    </ligand>
</feature>
<feature type="binding site" evidence="1">
    <location>
        <begin position="190"/>
        <end position="192"/>
    </location>
    <ligand>
        <name>substrate</name>
    </ligand>
</feature>
<feature type="binding site" evidence="1">
    <location>
        <position position="194"/>
    </location>
    <ligand>
        <name>FMN</name>
        <dbReference type="ChEBI" id="CHEBI:58210"/>
    </ligand>
</feature>
<proteinExistence type="inferred from homology"/>
<keyword id="KW-0285">Flavoprotein</keyword>
<keyword id="KW-0288">FMN</keyword>
<keyword id="KW-0560">Oxidoreductase</keyword>
<keyword id="KW-0664">Pyridoxine biosynthesis</keyword>
<keyword id="KW-1185">Reference proteome</keyword>
<comment type="function">
    <text evidence="1">Catalyzes the oxidation of either pyridoxine 5'-phosphate (PNP) or pyridoxamine 5'-phosphate (PMP) into pyridoxal 5'-phosphate (PLP).</text>
</comment>
<comment type="catalytic activity">
    <reaction evidence="1">
        <text>pyridoxamine 5'-phosphate + O2 + H2O = pyridoxal 5'-phosphate + H2O2 + NH4(+)</text>
        <dbReference type="Rhea" id="RHEA:15817"/>
        <dbReference type="ChEBI" id="CHEBI:15377"/>
        <dbReference type="ChEBI" id="CHEBI:15379"/>
        <dbReference type="ChEBI" id="CHEBI:16240"/>
        <dbReference type="ChEBI" id="CHEBI:28938"/>
        <dbReference type="ChEBI" id="CHEBI:58451"/>
        <dbReference type="ChEBI" id="CHEBI:597326"/>
        <dbReference type="EC" id="1.4.3.5"/>
    </reaction>
</comment>
<comment type="catalytic activity">
    <reaction evidence="1">
        <text>pyridoxine 5'-phosphate + O2 = pyridoxal 5'-phosphate + H2O2</text>
        <dbReference type="Rhea" id="RHEA:15149"/>
        <dbReference type="ChEBI" id="CHEBI:15379"/>
        <dbReference type="ChEBI" id="CHEBI:16240"/>
        <dbReference type="ChEBI" id="CHEBI:58589"/>
        <dbReference type="ChEBI" id="CHEBI:597326"/>
        <dbReference type="EC" id="1.4.3.5"/>
    </reaction>
</comment>
<comment type="cofactor">
    <cofactor evidence="1">
        <name>FMN</name>
        <dbReference type="ChEBI" id="CHEBI:58210"/>
    </cofactor>
    <text evidence="1">Binds 1 FMN per subunit.</text>
</comment>
<comment type="pathway">
    <text evidence="1">Cofactor metabolism; pyridoxal 5'-phosphate salvage; pyridoxal 5'-phosphate from pyridoxamine 5'-phosphate: step 1/1.</text>
</comment>
<comment type="pathway">
    <text evidence="1">Cofactor metabolism; pyridoxal 5'-phosphate salvage; pyridoxal 5'-phosphate from pyridoxine 5'-phosphate: step 1/1.</text>
</comment>
<comment type="subunit">
    <text evidence="1">Homodimer.</text>
</comment>
<comment type="similarity">
    <text evidence="1">Belongs to the pyridoxamine 5'-phosphate oxidase family.</text>
</comment>
<comment type="sequence caution" evidence="2">
    <conflict type="erroneous initiation">
        <sequence resource="EMBL-CDS" id="ABD69784"/>
    </conflict>
</comment>
<reference key="1">
    <citation type="submission" date="2006-02" db="EMBL/GenBank/DDBJ databases">
        <title>Complete sequence of chromosome of Rhodoferax ferrireducens DSM 15236.</title>
        <authorList>
            <person name="Copeland A."/>
            <person name="Lucas S."/>
            <person name="Lapidus A."/>
            <person name="Barry K."/>
            <person name="Detter J.C."/>
            <person name="Glavina del Rio T."/>
            <person name="Hammon N."/>
            <person name="Israni S."/>
            <person name="Pitluck S."/>
            <person name="Brettin T."/>
            <person name="Bruce D."/>
            <person name="Han C."/>
            <person name="Tapia R."/>
            <person name="Gilna P."/>
            <person name="Kiss H."/>
            <person name="Schmutz J."/>
            <person name="Larimer F."/>
            <person name="Land M."/>
            <person name="Kyrpides N."/>
            <person name="Ivanova N."/>
            <person name="Richardson P."/>
        </authorList>
    </citation>
    <scope>NUCLEOTIDE SEQUENCE [LARGE SCALE GENOMIC DNA]</scope>
    <source>
        <strain>ATCC BAA-621 / DSM 15236 / T118</strain>
    </source>
</reference>